<dbReference type="EMBL" id="X79072">
    <property type="protein sequence ID" value="CAA55672.1"/>
    <property type="molecule type" value="mRNA"/>
</dbReference>
<dbReference type="PIR" id="A55081">
    <property type="entry name" value="A55081"/>
</dbReference>
<dbReference type="SMR" id="P51486"/>
<dbReference type="GO" id="GO:0005737">
    <property type="term" value="C:cytoplasm"/>
    <property type="evidence" value="ECO:0007669"/>
    <property type="project" value="TreeGrafter"/>
</dbReference>
<dbReference type="GO" id="GO:0001664">
    <property type="term" value="F:G protein-coupled receptor binding"/>
    <property type="evidence" value="ECO:0007669"/>
    <property type="project" value="TreeGrafter"/>
</dbReference>
<dbReference type="GO" id="GO:0002031">
    <property type="term" value="P:G protein-coupled receptor internalization"/>
    <property type="evidence" value="ECO:0007669"/>
    <property type="project" value="TreeGrafter"/>
</dbReference>
<dbReference type="GO" id="GO:0007165">
    <property type="term" value="P:signal transduction"/>
    <property type="evidence" value="ECO:0007669"/>
    <property type="project" value="InterPro"/>
</dbReference>
<dbReference type="GO" id="GO:0007601">
    <property type="term" value="P:visual perception"/>
    <property type="evidence" value="ECO:0007669"/>
    <property type="project" value="UniProtKB-KW"/>
</dbReference>
<dbReference type="FunFam" id="2.60.40.640:FF:000022">
    <property type="entry name" value="Arrestin 1"/>
    <property type="match status" value="1"/>
</dbReference>
<dbReference type="FunFam" id="2.60.40.840:FF:000002">
    <property type="entry name" value="Arrestin 3"/>
    <property type="match status" value="1"/>
</dbReference>
<dbReference type="Gene3D" id="2.60.40.640">
    <property type="match status" value="1"/>
</dbReference>
<dbReference type="Gene3D" id="2.60.40.840">
    <property type="match status" value="1"/>
</dbReference>
<dbReference type="InterPro" id="IPR000698">
    <property type="entry name" value="Arrestin"/>
</dbReference>
<dbReference type="InterPro" id="IPR014752">
    <property type="entry name" value="Arrestin-like_C"/>
</dbReference>
<dbReference type="InterPro" id="IPR011021">
    <property type="entry name" value="Arrestin-like_N"/>
</dbReference>
<dbReference type="InterPro" id="IPR011022">
    <property type="entry name" value="Arrestin_C-like"/>
</dbReference>
<dbReference type="InterPro" id="IPR017864">
    <property type="entry name" value="Arrestin_CS"/>
</dbReference>
<dbReference type="InterPro" id="IPR014753">
    <property type="entry name" value="Arrestin_N"/>
</dbReference>
<dbReference type="InterPro" id="IPR014756">
    <property type="entry name" value="Ig_E-set"/>
</dbReference>
<dbReference type="PANTHER" id="PTHR11792">
    <property type="entry name" value="ARRESTIN"/>
    <property type="match status" value="1"/>
</dbReference>
<dbReference type="PANTHER" id="PTHR11792:SF16">
    <property type="entry name" value="PHOSRESTIN-2"/>
    <property type="match status" value="1"/>
</dbReference>
<dbReference type="Pfam" id="PF02752">
    <property type="entry name" value="Arrestin_C"/>
    <property type="match status" value="1"/>
</dbReference>
<dbReference type="Pfam" id="PF00339">
    <property type="entry name" value="Arrestin_N"/>
    <property type="match status" value="1"/>
</dbReference>
<dbReference type="PRINTS" id="PR00309">
    <property type="entry name" value="ARRESTIN"/>
</dbReference>
<dbReference type="SMART" id="SM01017">
    <property type="entry name" value="Arrestin_C"/>
    <property type="match status" value="1"/>
</dbReference>
<dbReference type="SUPFAM" id="SSF81296">
    <property type="entry name" value="E set domains"/>
    <property type="match status" value="2"/>
</dbReference>
<dbReference type="PROSITE" id="PS00295">
    <property type="entry name" value="ARRESTINS"/>
    <property type="match status" value="1"/>
</dbReference>
<keyword id="KW-0716">Sensory transduction</keyword>
<keyword id="KW-0844">Vision</keyword>
<protein>
    <recommendedName>
        <fullName>Phosrestin-2</fullName>
    </recommendedName>
    <alternativeName>
        <fullName>Arrestin-1</fullName>
    </alternativeName>
    <alternativeName>
        <fullName>Arrestin-A</fullName>
    </alternativeName>
    <alternativeName>
        <fullName>Phosrestin II</fullName>
    </alternativeName>
</protein>
<comment type="similarity">
    <text evidence="1">Belongs to the arrestin family.</text>
</comment>
<gene>
    <name type="primary">ARR1</name>
</gene>
<evidence type="ECO:0000305" key="1"/>
<reference key="1">
    <citation type="journal article" date="1994" name="J. Biol. Chem.">
        <title>Mechanism of arrestin 2 function in rhabdomeric photoreceptors.</title>
        <authorList>
            <person name="Plangger A."/>
            <person name="Malicki D."/>
            <person name="Whitney M."/>
            <person name="Paulsen R."/>
        </authorList>
    </citation>
    <scope>NUCLEOTIDE SEQUENCE [MRNA]</scope>
    <source>
        <tissue>Retina</tissue>
    </source>
</reference>
<name>ARR1_CALVI</name>
<feature type="chain" id="PRO_0000205214" description="Phosrestin-2">
    <location>
        <begin position="1"/>
        <end position="363"/>
    </location>
</feature>
<proteinExistence type="evidence at transcript level"/>
<sequence length="363" mass="40680">MVVNFKIFKKASPNNMVTLYMNRREFVDSVTQVEPVDGIVVLDDEYIRQNRKIFVQLICNFRYGREDDEMIGLRFQKELILVSQPVYPEQKIDIQLTKMQERLLKKLGSNAYPFILEMPPSSPASVVLQQKANDSTQPCGVQYFVKVFAGENDCDRSHRRSTVNLGIRKVQYAPTKTGIQPCTVVRKDFLLSPGELELEVTLDRQLYYHGEKISINICVRNNSNKVVKKIKAMVQQGIDVVLFQNGQFRNTIAFAESSEGCPLNPGSSLQKIMYLVPNLAANCDRAGIAVEGDVKHKNTSLASTTLIASQEARDAFGIIVSYAVKVKLFLGALGGELCAELPFILMHPKPSLKAQPEAETEEA</sequence>
<organism>
    <name type="scientific">Calliphora vicina</name>
    <name type="common">Blue blowfly</name>
    <name type="synonym">Calliphora erythrocephala</name>
    <dbReference type="NCBI Taxonomy" id="7373"/>
    <lineage>
        <taxon>Eukaryota</taxon>
        <taxon>Metazoa</taxon>
        <taxon>Ecdysozoa</taxon>
        <taxon>Arthropoda</taxon>
        <taxon>Hexapoda</taxon>
        <taxon>Insecta</taxon>
        <taxon>Pterygota</taxon>
        <taxon>Neoptera</taxon>
        <taxon>Endopterygota</taxon>
        <taxon>Diptera</taxon>
        <taxon>Brachycera</taxon>
        <taxon>Muscomorpha</taxon>
        <taxon>Oestroidea</taxon>
        <taxon>Calliphoridae</taxon>
        <taxon>Calliphorinae</taxon>
        <taxon>Calliphora</taxon>
    </lineage>
</organism>
<accession>P51486</accession>